<keyword id="KW-0012">Acyltransferase</keyword>
<keyword id="KW-0963">Cytoplasm</keyword>
<keyword id="KW-0275">Fatty acid biosynthesis</keyword>
<keyword id="KW-0276">Fatty acid metabolism</keyword>
<keyword id="KW-0444">Lipid biosynthesis</keyword>
<keyword id="KW-0443">Lipid metabolism</keyword>
<keyword id="KW-0511">Multifunctional enzyme</keyword>
<keyword id="KW-1185">Reference proteome</keyword>
<keyword id="KW-0808">Transferase</keyword>
<evidence type="ECO:0000255" key="1">
    <source>
        <dbReference type="HAMAP-Rule" id="MF_01815"/>
    </source>
</evidence>
<gene>
    <name evidence="1" type="primary">fabH</name>
    <name type="ordered locus">Bfl406</name>
</gene>
<feature type="chain" id="PRO_0000110410" description="Beta-ketoacyl-[acyl-carrier-protein] synthase III">
    <location>
        <begin position="1"/>
        <end position="318"/>
    </location>
</feature>
<feature type="region of interest" description="ACP-binding" evidence="1">
    <location>
        <begin position="246"/>
        <end position="250"/>
    </location>
</feature>
<feature type="active site" evidence="1">
    <location>
        <position position="112"/>
    </location>
</feature>
<feature type="active site" evidence="1">
    <location>
        <position position="245"/>
    </location>
</feature>
<feature type="active site" evidence="1">
    <location>
        <position position="275"/>
    </location>
</feature>
<proteinExistence type="inferred from homology"/>
<protein>
    <recommendedName>
        <fullName evidence="1">Beta-ketoacyl-[acyl-carrier-protein] synthase III</fullName>
        <shortName evidence="1">Beta-ketoacyl-ACP synthase III</shortName>
        <shortName evidence="1">KAS III</shortName>
        <ecNumber evidence="1">2.3.1.180</ecNumber>
    </recommendedName>
    <alternativeName>
        <fullName evidence="1">3-oxoacyl-[acyl-carrier-protein] synthase 3</fullName>
    </alternativeName>
    <alternativeName>
        <fullName evidence="1">3-oxoacyl-[acyl-carrier-protein] synthase III</fullName>
    </alternativeName>
</protein>
<comment type="function">
    <text evidence="1">Catalyzes the condensation reaction of fatty acid synthesis by the addition to an acyl acceptor of two carbons from malonyl-ACP. Catalyzes the first condensation reaction which initiates fatty acid synthesis and may therefore play a role in governing the total rate of fatty acid production. Possesses both acetoacetyl-ACP synthase and acetyl transacylase activities. Its substrate specificity determines the biosynthesis of branched-chain and/or straight-chain of fatty acids.</text>
</comment>
<comment type="catalytic activity">
    <reaction evidence="1">
        <text>malonyl-[ACP] + acetyl-CoA + H(+) = 3-oxobutanoyl-[ACP] + CO2 + CoA</text>
        <dbReference type="Rhea" id="RHEA:12080"/>
        <dbReference type="Rhea" id="RHEA-COMP:9623"/>
        <dbReference type="Rhea" id="RHEA-COMP:9625"/>
        <dbReference type="ChEBI" id="CHEBI:15378"/>
        <dbReference type="ChEBI" id="CHEBI:16526"/>
        <dbReference type="ChEBI" id="CHEBI:57287"/>
        <dbReference type="ChEBI" id="CHEBI:57288"/>
        <dbReference type="ChEBI" id="CHEBI:78449"/>
        <dbReference type="ChEBI" id="CHEBI:78450"/>
        <dbReference type="EC" id="2.3.1.180"/>
    </reaction>
</comment>
<comment type="pathway">
    <text evidence="1">Lipid metabolism; fatty acid biosynthesis.</text>
</comment>
<comment type="subunit">
    <text evidence="1">Homodimer.</text>
</comment>
<comment type="subcellular location">
    <subcellularLocation>
        <location evidence="1">Cytoplasm</location>
    </subcellularLocation>
</comment>
<comment type="domain">
    <text evidence="1">The last Arg residue of the ACP-binding site is essential for the weak association between ACP/AcpP and FabH.</text>
</comment>
<comment type="similarity">
    <text evidence="1">Belongs to the thiolase-like superfamily. FabH family.</text>
</comment>
<reference key="1">
    <citation type="journal article" date="2003" name="Proc. Natl. Acad. Sci. U.S.A.">
        <title>The genome sequence of Blochmannia floridanus: comparative analysis of reduced genomes.</title>
        <authorList>
            <person name="Gil R."/>
            <person name="Silva F.J."/>
            <person name="Zientz E."/>
            <person name="Delmotte F."/>
            <person name="Gonzalez-Candelas F."/>
            <person name="Latorre A."/>
            <person name="Rausell C."/>
            <person name="Kamerbeek J."/>
            <person name="Gadau J."/>
            <person name="Hoelldobler B."/>
            <person name="van Ham R.C.H.J."/>
            <person name="Gross R."/>
            <person name="Moya A."/>
        </authorList>
    </citation>
    <scope>NUCLEOTIDE SEQUENCE [LARGE SCALE GENOMIC DNA]</scope>
</reference>
<accession>Q7VR18</accession>
<sequence>MFTKILGTGSYLPKYIRSNIILEKMVDTSNAWIIARTGIKERRISNSSETVAKMGYFASKKALDMSCIEANEIGIIIVATTSSSHAFPSSACQIQRDLKISDTIAFDLSAACSGFVYALDVANQYIKNGVVKYALIVGSDILSHFLNPNDRSTLILFGDGAGAVILGRSKSPGIISTHLHANGYYGDLLTLPHYNTQNPEKLSVYLTMSGNKVFKMAIATLTGIINETLHANNLQQDELDWLVPHQANLRIISKAAKRLNIDMEKIIITLHKHGNTSAASIPLALDEAVRDGRIKSNQLLLLEAFGAGLTWGSVLLRF</sequence>
<organism>
    <name type="scientific">Blochmanniella floridana</name>
    <dbReference type="NCBI Taxonomy" id="203907"/>
    <lineage>
        <taxon>Bacteria</taxon>
        <taxon>Pseudomonadati</taxon>
        <taxon>Pseudomonadota</taxon>
        <taxon>Gammaproteobacteria</taxon>
        <taxon>Enterobacterales</taxon>
        <taxon>Enterobacteriaceae</taxon>
        <taxon>ant endosymbionts</taxon>
        <taxon>Candidatus Blochmanniella</taxon>
    </lineage>
</organism>
<dbReference type="EC" id="2.3.1.180" evidence="1"/>
<dbReference type="EMBL" id="BX248583">
    <property type="protein sequence ID" value="CAD83472.1"/>
    <property type="molecule type" value="Genomic_DNA"/>
</dbReference>
<dbReference type="SMR" id="Q7VR18"/>
<dbReference type="STRING" id="203907.Bfl406"/>
<dbReference type="KEGG" id="bfl:Bfl406"/>
<dbReference type="eggNOG" id="COG0332">
    <property type="taxonomic scope" value="Bacteria"/>
</dbReference>
<dbReference type="HOGENOM" id="CLU_039592_3_1_6"/>
<dbReference type="OrthoDB" id="9815506at2"/>
<dbReference type="UniPathway" id="UPA00094"/>
<dbReference type="Proteomes" id="UP000002192">
    <property type="component" value="Chromosome"/>
</dbReference>
<dbReference type="GO" id="GO:0005737">
    <property type="term" value="C:cytoplasm"/>
    <property type="evidence" value="ECO:0007669"/>
    <property type="project" value="UniProtKB-SubCell"/>
</dbReference>
<dbReference type="GO" id="GO:0004315">
    <property type="term" value="F:3-oxoacyl-[acyl-carrier-protein] synthase activity"/>
    <property type="evidence" value="ECO:0007669"/>
    <property type="project" value="InterPro"/>
</dbReference>
<dbReference type="GO" id="GO:0033818">
    <property type="term" value="F:beta-ketoacyl-acyl-carrier-protein synthase III activity"/>
    <property type="evidence" value="ECO:0007669"/>
    <property type="project" value="UniProtKB-UniRule"/>
</dbReference>
<dbReference type="GO" id="GO:0006633">
    <property type="term" value="P:fatty acid biosynthetic process"/>
    <property type="evidence" value="ECO:0007669"/>
    <property type="project" value="UniProtKB-UniRule"/>
</dbReference>
<dbReference type="GO" id="GO:0044550">
    <property type="term" value="P:secondary metabolite biosynthetic process"/>
    <property type="evidence" value="ECO:0007669"/>
    <property type="project" value="TreeGrafter"/>
</dbReference>
<dbReference type="CDD" id="cd00830">
    <property type="entry name" value="KAS_III"/>
    <property type="match status" value="1"/>
</dbReference>
<dbReference type="FunFam" id="3.40.47.10:FF:000004">
    <property type="entry name" value="3-oxoacyl-[acyl-carrier-protein] synthase 3"/>
    <property type="match status" value="1"/>
</dbReference>
<dbReference type="Gene3D" id="3.40.47.10">
    <property type="match status" value="1"/>
</dbReference>
<dbReference type="HAMAP" id="MF_01815">
    <property type="entry name" value="FabH"/>
    <property type="match status" value="1"/>
</dbReference>
<dbReference type="InterPro" id="IPR013747">
    <property type="entry name" value="ACP_syn_III_C"/>
</dbReference>
<dbReference type="InterPro" id="IPR013751">
    <property type="entry name" value="ACP_syn_III_N"/>
</dbReference>
<dbReference type="InterPro" id="IPR004655">
    <property type="entry name" value="FabH"/>
</dbReference>
<dbReference type="InterPro" id="IPR016039">
    <property type="entry name" value="Thiolase-like"/>
</dbReference>
<dbReference type="NCBIfam" id="TIGR00747">
    <property type="entry name" value="fabH"/>
    <property type="match status" value="1"/>
</dbReference>
<dbReference type="NCBIfam" id="NF006829">
    <property type="entry name" value="PRK09352.1"/>
    <property type="match status" value="1"/>
</dbReference>
<dbReference type="PANTHER" id="PTHR34069">
    <property type="entry name" value="3-OXOACYL-[ACYL-CARRIER-PROTEIN] SYNTHASE 3"/>
    <property type="match status" value="1"/>
</dbReference>
<dbReference type="PANTHER" id="PTHR34069:SF2">
    <property type="entry name" value="BETA-KETOACYL-[ACYL-CARRIER-PROTEIN] SYNTHASE III"/>
    <property type="match status" value="1"/>
</dbReference>
<dbReference type="Pfam" id="PF08545">
    <property type="entry name" value="ACP_syn_III"/>
    <property type="match status" value="1"/>
</dbReference>
<dbReference type="Pfam" id="PF08541">
    <property type="entry name" value="ACP_syn_III_C"/>
    <property type="match status" value="1"/>
</dbReference>
<dbReference type="SUPFAM" id="SSF53901">
    <property type="entry name" value="Thiolase-like"/>
    <property type="match status" value="1"/>
</dbReference>
<name>FABH_BLOFL</name>